<protein>
    <recommendedName>
        <fullName evidence="2">Pericyclase pydY</fullName>
        <ecNumber evidence="1">5.-.-.-</ecNumber>
    </recommendedName>
    <alternativeName>
        <fullName evidence="2">Pyrrocidines biosynthesis cluster protein Y</fullName>
    </alternativeName>
</protein>
<proteinExistence type="evidence at protein level"/>
<keyword id="KW-0413">Isomerase</keyword>
<keyword id="KW-0843">Virulence</keyword>
<organism>
    <name type="scientific">Acremonium sp</name>
    <dbReference type="NCBI Taxonomy" id="2046025"/>
    <lineage>
        <taxon>Eukaryota</taxon>
        <taxon>Fungi</taxon>
        <taxon>Dikarya</taxon>
        <taxon>Ascomycota</taxon>
        <taxon>Pezizomycotina</taxon>
        <taxon>Sordariomycetes</taxon>
        <taxon>Hypocreomycetidae</taxon>
        <taxon>Hypocreales</taxon>
        <taxon>Hypocreales incertae sedis</taxon>
        <taxon>Acremonium</taxon>
    </lineage>
</organism>
<gene>
    <name evidence="2" type="primary">pydY</name>
</gene>
<comment type="function">
    <text evidence="1 4">Pericyclase; part of the gene cluster that mediates the biosynthesis of pyrrocidines, fungal natural products containing a macrocyclic para-cyclophane connected to a decahydrofluorene ring system that show potent antibiotic activities toward Gram-negative bacteria (PubMed:33834778). Within the pathway, pydY is involved in the late Diels-Alder cycloaddition step that leads to the formation of the decahydrofluorene core (PubMed:33834778). The pathway begins with the PKS-NRPS pydA which, with the help of the trans-enoyl reductase pydC, synthesizes the polyketide-tyrosyl acyl thioester product which can be reductively off-loaded by the terminal reductase (R) domain in pydA. The alpha/beta hydrolase pydG is then required to catalyze the subsequent Knoevenagel condensation that affords the 3-pyrrolin-2-one ring, whereas the four proteins pydB, pydE, pydX and pydZ then function synergistically to form the cyclophane. PydB and the membrane-bound pydX and pydZ are lipid-binding proteins that can sequester and mold the pdyG product into the inverse S-shape. Binding of the medium chain reductase pydE to the complex would trigger the cascade oxidative cyclization. PydY is involved in the Diels-Alder cycloaddition that forms the decahydrofluorene core. Additional non-enzymatic hydroxylation yields pyrrocidine A2 which can be further reduced into pyrrocidine B by an endogenous reductase (Probable).</text>
</comment>
<comment type="pathway">
    <text evidence="1">Mycotoxin biosynthesis.</text>
</comment>
<comment type="similarity">
    <text evidence="3">Belongs to the pericyclase pydY family.</text>
</comment>
<dbReference type="EC" id="5.-.-.-" evidence="1"/>
<dbReference type="EMBL" id="MW690134">
    <property type="protein sequence ID" value="QXF14605.1"/>
    <property type="molecule type" value="Genomic_DNA"/>
</dbReference>
<dbReference type="GO" id="GO:0016853">
    <property type="term" value="F:isomerase activity"/>
    <property type="evidence" value="ECO:0007669"/>
    <property type="project" value="UniProtKB-KW"/>
</dbReference>
<dbReference type="InterPro" id="IPR053037">
    <property type="entry name" value="Pericyclase_pydY-like"/>
</dbReference>
<dbReference type="PANTHER" id="PTHR38115">
    <property type="entry name" value="LIPOCALIN-LIKE DOMAIN-CONTAINING PROTEIN"/>
    <property type="match status" value="1"/>
</dbReference>
<dbReference type="PANTHER" id="PTHR38115:SF1">
    <property type="entry name" value="LIPOCALIN-LIKE DOMAIN-CONTAINING PROTEIN"/>
    <property type="match status" value="1"/>
</dbReference>
<name>PYDY_ACRSP</name>
<accession>A0A8F4NUC6</accession>
<evidence type="ECO:0000269" key="1">
    <source>
    </source>
</evidence>
<evidence type="ECO:0000303" key="2">
    <source>
    </source>
</evidence>
<evidence type="ECO:0000305" key="3"/>
<evidence type="ECO:0000305" key="4">
    <source>
    </source>
</evidence>
<reference key="1">
    <citation type="journal article" date="2021" name="J. Am. Chem. Soc.">
        <title>Biosynthesis of para-cyclophane-containing hirsutellone family of fungal natural products.</title>
        <authorList>
            <person name="Ohashi M."/>
            <person name="Kakule T.B."/>
            <person name="Tang M.C."/>
            <person name="Jamieson C.S."/>
            <person name="Liu M."/>
            <person name="Zhao Y.L."/>
            <person name="Houk K.N."/>
            <person name="Tang Y."/>
        </authorList>
    </citation>
    <scope>NUCLEOTIDE SEQUENCE [GENOMIC DNA]</scope>
    <scope>FUNCTION</scope>
    <scope>CATALYTIC ACTIVITY</scope>
    <scope>PATHWAY</scope>
</reference>
<sequence>MATPGNVTFKNTHDSWGMNWGLCDSSEQMLTMQGMPWIMRKLASWISVTVVIKTWTDPETGETRFLLQHNPPMGLPGMSEERALDYVPDELTVPNLGKLRVRTRWGTAKELDQLDKYLARGLEKGPHSMIHMMTEHLDIDAVTHQIFGYEEIDGTRYHVRRIVVRKGHEVARLRLVYNYLGPRAG</sequence>
<feature type="chain" id="PRO_0000458435" description="Pericyclase pydY">
    <location>
        <begin position="1"/>
        <end position="185"/>
    </location>
</feature>